<gene>
    <name evidence="4" type="primary">APK3</name>
    <name type="ordered locus">At3g03900</name>
    <name type="ORF">F20H23.5</name>
    <name type="ORF">T11I18.1</name>
</gene>
<dbReference type="EC" id="2.7.1.25" evidence="2"/>
<dbReference type="EMBL" id="AC009540">
    <property type="protein sequence ID" value="AAF00628.1"/>
    <property type="molecule type" value="Genomic_DNA"/>
</dbReference>
<dbReference type="EMBL" id="AC011698">
    <property type="protein sequence ID" value="AAF05850.1"/>
    <property type="molecule type" value="Genomic_DNA"/>
</dbReference>
<dbReference type="EMBL" id="CP002686">
    <property type="protein sequence ID" value="AEE74010.1"/>
    <property type="molecule type" value="Genomic_DNA"/>
</dbReference>
<dbReference type="EMBL" id="CP002686">
    <property type="protein sequence ID" value="ANM65534.1"/>
    <property type="molecule type" value="Genomic_DNA"/>
</dbReference>
<dbReference type="RefSeq" id="NP_001319463.1">
    <property type="nucleotide sequence ID" value="NM_001337491.1"/>
</dbReference>
<dbReference type="RefSeq" id="NP_001327493.1">
    <property type="nucleotide sequence ID" value="NM_001337492.1"/>
</dbReference>
<dbReference type="SMR" id="Q9SRW7"/>
<dbReference type="FunCoup" id="Q9SRW7">
    <property type="interactions" value="122"/>
</dbReference>
<dbReference type="STRING" id="3702.Q9SRW7"/>
<dbReference type="PaxDb" id="3702-AT3G03900.1"/>
<dbReference type="ProteomicsDB" id="246951"/>
<dbReference type="EnsemblPlants" id="AT3G03900.1">
    <property type="protein sequence ID" value="AT3G03900.1"/>
    <property type="gene ID" value="AT3G03900"/>
</dbReference>
<dbReference type="EnsemblPlants" id="AT3G03900.2">
    <property type="protein sequence ID" value="AT3G03900.2"/>
    <property type="gene ID" value="AT3G03900"/>
</dbReference>
<dbReference type="GeneID" id="821077"/>
<dbReference type="Gramene" id="AT3G03900.1">
    <property type="protein sequence ID" value="AT3G03900.1"/>
    <property type="gene ID" value="AT3G03900"/>
</dbReference>
<dbReference type="Gramene" id="AT3G03900.2">
    <property type="protein sequence ID" value="AT3G03900.2"/>
    <property type="gene ID" value="AT3G03900"/>
</dbReference>
<dbReference type="KEGG" id="ath:AT3G03900"/>
<dbReference type="Araport" id="AT3G03900"/>
<dbReference type="TAIR" id="AT3G03900">
    <property type="gene designation" value="APK3"/>
</dbReference>
<dbReference type="eggNOG" id="KOG0635">
    <property type="taxonomic scope" value="Eukaryota"/>
</dbReference>
<dbReference type="HOGENOM" id="CLU_046932_1_0_1"/>
<dbReference type="InParanoid" id="Q9SRW7"/>
<dbReference type="OMA" id="HENTVEE"/>
<dbReference type="OrthoDB" id="506431at2759"/>
<dbReference type="PhylomeDB" id="Q9SRW7"/>
<dbReference type="BioCyc" id="ARA:AT3G03900-MONOMER"/>
<dbReference type="SABIO-RK" id="Q9SRW7"/>
<dbReference type="UniPathway" id="UPA00140">
    <property type="reaction ID" value="UER00205"/>
</dbReference>
<dbReference type="PRO" id="PR:Q9SRW7"/>
<dbReference type="Proteomes" id="UP000006548">
    <property type="component" value="Chromosome 3"/>
</dbReference>
<dbReference type="ExpressionAtlas" id="Q9SRW7">
    <property type="expression patterns" value="baseline and differential"/>
</dbReference>
<dbReference type="GO" id="GO:0005829">
    <property type="term" value="C:cytosol"/>
    <property type="evidence" value="ECO:0000314"/>
    <property type="project" value="UniProtKB"/>
</dbReference>
<dbReference type="GO" id="GO:0004020">
    <property type="term" value="F:adenylylsulfate kinase activity"/>
    <property type="evidence" value="ECO:0000314"/>
    <property type="project" value="UniProtKB"/>
</dbReference>
<dbReference type="GO" id="GO:0005524">
    <property type="term" value="F:ATP binding"/>
    <property type="evidence" value="ECO:0007669"/>
    <property type="project" value="UniProtKB-KW"/>
</dbReference>
<dbReference type="GO" id="GO:0019344">
    <property type="term" value="P:cysteine biosynthetic process"/>
    <property type="evidence" value="ECO:0007669"/>
    <property type="project" value="UniProtKB-KW"/>
</dbReference>
<dbReference type="GO" id="GO:0070814">
    <property type="term" value="P:hydrogen sulfide biosynthetic process"/>
    <property type="evidence" value="ECO:0007669"/>
    <property type="project" value="UniProtKB-UniPathway"/>
</dbReference>
<dbReference type="GO" id="GO:0000103">
    <property type="term" value="P:sulfate assimilation"/>
    <property type="evidence" value="ECO:0007669"/>
    <property type="project" value="InterPro"/>
</dbReference>
<dbReference type="CDD" id="cd02027">
    <property type="entry name" value="APSK"/>
    <property type="match status" value="1"/>
</dbReference>
<dbReference type="FunFam" id="3.40.50.300:FF:000629">
    <property type="entry name" value="Adenylyl-sulfate kinase"/>
    <property type="match status" value="1"/>
</dbReference>
<dbReference type="Gene3D" id="3.40.50.300">
    <property type="entry name" value="P-loop containing nucleotide triphosphate hydrolases"/>
    <property type="match status" value="1"/>
</dbReference>
<dbReference type="HAMAP" id="MF_00065">
    <property type="entry name" value="Adenylyl_sulf_kinase"/>
    <property type="match status" value="1"/>
</dbReference>
<dbReference type="InterPro" id="IPR002891">
    <property type="entry name" value="APS_kinase"/>
</dbReference>
<dbReference type="InterPro" id="IPR027417">
    <property type="entry name" value="P-loop_NTPase"/>
</dbReference>
<dbReference type="NCBIfam" id="TIGR00455">
    <property type="entry name" value="apsK"/>
    <property type="match status" value="1"/>
</dbReference>
<dbReference type="NCBIfam" id="NF003013">
    <property type="entry name" value="PRK03846.1"/>
    <property type="match status" value="1"/>
</dbReference>
<dbReference type="PANTHER" id="PTHR11055">
    <property type="entry name" value="BIFUNCTIONAL 3'-PHOSPHOADENOSINE 5'-PHOSPHOSULFATE SYNTHASE"/>
    <property type="match status" value="1"/>
</dbReference>
<dbReference type="PANTHER" id="PTHR11055:SF1">
    <property type="entry name" value="PAPS SYNTHETASE, ISOFORM D"/>
    <property type="match status" value="1"/>
</dbReference>
<dbReference type="Pfam" id="PF01583">
    <property type="entry name" value="APS_kinase"/>
    <property type="match status" value="1"/>
</dbReference>
<dbReference type="SUPFAM" id="SSF52540">
    <property type="entry name" value="P-loop containing nucleoside triphosphate hydrolases"/>
    <property type="match status" value="1"/>
</dbReference>
<comment type="function">
    <text evidence="2 3">Catalyzes the synthesis of activated sulfate for the sulfation of secondary metabolites, including the glucosinolates (PubMed:19304933). Essential for plant reproduction and viability (PubMed:19903478).</text>
</comment>
<comment type="catalytic activity">
    <reaction evidence="2">
        <text>adenosine 5'-phosphosulfate + ATP = 3'-phosphoadenylyl sulfate + ADP + H(+)</text>
        <dbReference type="Rhea" id="RHEA:24152"/>
        <dbReference type="ChEBI" id="CHEBI:15378"/>
        <dbReference type="ChEBI" id="CHEBI:30616"/>
        <dbReference type="ChEBI" id="CHEBI:58243"/>
        <dbReference type="ChEBI" id="CHEBI:58339"/>
        <dbReference type="ChEBI" id="CHEBI:456216"/>
        <dbReference type="EC" id="2.7.1.25"/>
    </reaction>
    <physiologicalReaction direction="left-to-right" evidence="2">
        <dbReference type="Rhea" id="RHEA:24153"/>
    </physiologicalReaction>
</comment>
<comment type="biophysicochemical properties">
    <kinetics>
        <KM evidence="2">7.4 uM for adenylyl sulfate</KM>
        <Vmax evidence="2">12.4 mmol/min/mg enzyme</Vmax>
    </kinetics>
</comment>
<comment type="pathway">
    <text evidence="5">Sulfur metabolism; hydrogen sulfide biosynthesis; sulfite from sulfate: step 2/3.</text>
</comment>
<comment type="subcellular location">
    <subcellularLocation>
        <location evidence="2">Cytoplasm</location>
        <location evidence="2">Cytosol</location>
    </subcellularLocation>
</comment>
<comment type="tissue specificity">
    <text evidence="2">Expressed in root vasculature, root tips, leaf epidermal and guard cells, pollen grains and radicle of immature seeds.</text>
</comment>
<comment type="disruption phenotype">
    <text evidence="2">No visible phenotype under normal growth conditions.</text>
</comment>
<comment type="similarity">
    <text evidence="5">Belongs to the APS kinase family.</text>
</comment>
<reference key="1">
    <citation type="journal article" date="2000" name="Nature">
        <title>Sequence and analysis of chromosome 3 of the plant Arabidopsis thaliana.</title>
        <authorList>
            <person name="Salanoubat M."/>
            <person name="Lemcke K."/>
            <person name="Rieger M."/>
            <person name="Ansorge W."/>
            <person name="Unseld M."/>
            <person name="Fartmann B."/>
            <person name="Valle G."/>
            <person name="Bloecker H."/>
            <person name="Perez-Alonso M."/>
            <person name="Obermaier B."/>
            <person name="Delseny M."/>
            <person name="Boutry M."/>
            <person name="Grivell L.A."/>
            <person name="Mache R."/>
            <person name="Puigdomenech P."/>
            <person name="De Simone V."/>
            <person name="Choisne N."/>
            <person name="Artiguenave F."/>
            <person name="Robert C."/>
            <person name="Brottier P."/>
            <person name="Wincker P."/>
            <person name="Cattolico L."/>
            <person name="Weissenbach J."/>
            <person name="Saurin W."/>
            <person name="Quetier F."/>
            <person name="Schaefer M."/>
            <person name="Mueller-Auer S."/>
            <person name="Gabel C."/>
            <person name="Fuchs M."/>
            <person name="Benes V."/>
            <person name="Wurmbach E."/>
            <person name="Drzonek H."/>
            <person name="Erfle H."/>
            <person name="Jordan N."/>
            <person name="Bangert S."/>
            <person name="Wiedelmann R."/>
            <person name="Kranz H."/>
            <person name="Voss H."/>
            <person name="Holland R."/>
            <person name="Brandt P."/>
            <person name="Nyakatura G."/>
            <person name="Vezzi A."/>
            <person name="D'Angelo M."/>
            <person name="Pallavicini A."/>
            <person name="Toppo S."/>
            <person name="Simionati B."/>
            <person name="Conrad A."/>
            <person name="Hornischer K."/>
            <person name="Kauer G."/>
            <person name="Loehnert T.-H."/>
            <person name="Nordsiek G."/>
            <person name="Reichelt J."/>
            <person name="Scharfe M."/>
            <person name="Schoen O."/>
            <person name="Bargues M."/>
            <person name="Terol J."/>
            <person name="Climent J."/>
            <person name="Navarro P."/>
            <person name="Collado C."/>
            <person name="Perez-Perez A."/>
            <person name="Ottenwaelder B."/>
            <person name="Duchemin D."/>
            <person name="Cooke R."/>
            <person name="Laudie M."/>
            <person name="Berger-Llauro C."/>
            <person name="Purnelle B."/>
            <person name="Masuy D."/>
            <person name="de Haan M."/>
            <person name="Maarse A.C."/>
            <person name="Alcaraz J.-P."/>
            <person name="Cottet A."/>
            <person name="Casacuberta E."/>
            <person name="Monfort A."/>
            <person name="Argiriou A."/>
            <person name="Flores M."/>
            <person name="Liguori R."/>
            <person name="Vitale D."/>
            <person name="Mannhaupt G."/>
            <person name="Haase D."/>
            <person name="Schoof H."/>
            <person name="Rudd S."/>
            <person name="Zaccaria P."/>
            <person name="Mewes H.-W."/>
            <person name="Mayer K.F.X."/>
            <person name="Kaul S."/>
            <person name="Town C.D."/>
            <person name="Koo H.L."/>
            <person name="Tallon L.J."/>
            <person name="Jenkins J."/>
            <person name="Rooney T."/>
            <person name="Rizzo M."/>
            <person name="Walts A."/>
            <person name="Utterback T."/>
            <person name="Fujii C.Y."/>
            <person name="Shea T.P."/>
            <person name="Creasy T.H."/>
            <person name="Haas B."/>
            <person name="Maiti R."/>
            <person name="Wu D."/>
            <person name="Peterson J."/>
            <person name="Van Aken S."/>
            <person name="Pai G."/>
            <person name="Militscher J."/>
            <person name="Sellers P."/>
            <person name="Gill J.E."/>
            <person name="Feldblyum T.V."/>
            <person name="Preuss D."/>
            <person name="Lin X."/>
            <person name="Nierman W.C."/>
            <person name="Salzberg S.L."/>
            <person name="White O."/>
            <person name="Venter J.C."/>
            <person name="Fraser C.M."/>
            <person name="Kaneko T."/>
            <person name="Nakamura Y."/>
            <person name="Sato S."/>
            <person name="Kato T."/>
            <person name="Asamizu E."/>
            <person name="Sasamoto S."/>
            <person name="Kimura T."/>
            <person name="Idesawa K."/>
            <person name="Kawashima K."/>
            <person name="Kishida Y."/>
            <person name="Kiyokawa C."/>
            <person name="Kohara M."/>
            <person name="Matsumoto M."/>
            <person name="Matsuno A."/>
            <person name="Muraki A."/>
            <person name="Nakayama S."/>
            <person name="Nakazaki N."/>
            <person name="Shinpo S."/>
            <person name="Takeuchi C."/>
            <person name="Wada T."/>
            <person name="Watanabe A."/>
            <person name="Yamada M."/>
            <person name="Yasuda M."/>
            <person name="Tabata S."/>
        </authorList>
    </citation>
    <scope>NUCLEOTIDE SEQUENCE [LARGE SCALE GENOMIC DNA]</scope>
    <source>
        <strain>cv. Columbia</strain>
    </source>
</reference>
<reference key="2">
    <citation type="journal article" date="2017" name="Plant J.">
        <title>Araport11: a complete reannotation of the Arabidopsis thaliana reference genome.</title>
        <authorList>
            <person name="Cheng C.Y."/>
            <person name="Krishnakumar V."/>
            <person name="Chan A.P."/>
            <person name="Thibaud-Nissen F."/>
            <person name="Schobel S."/>
            <person name="Town C.D."/>
        </authorList>
    </citation>
    <scope>GENOME REANNOTATION</scope>
    <source>
        <strain>cv. Columbia</strain>
    </source>
</reference>
<reference key="3">
    <citation type="journal article" date="2009" name="Plant Cell">
        <title>Disruption of adenosine-5'-phosphosulfate kinase in Arabidopsis reduces levels of sulfated secondary metabolites.</title>
        <authorList>
            <person name="Mugford S.G."/>
            <person name="Yoshimoto N."/>
            <person name="Reichelt M."/>
            <person name="Wirtz M."/>
            <person name="Hill L."/>
            <person name="Mugford S.T."/>
            <person name="Nakazato Y."/>
            <person name="Noji M."/>
            <person name="Takahashi H."/>
            <person name="Kramell R."/>
            <person name="Gigolashvili T."/>
            <person name="Fluegge U.I."/>
            <person name="Wasternack C."/>
            <person name="Gershenzon J."/>
            <person name="Hell R."/>
            <person name="Saito K."/>
            <person name="Kopriva S."/>
        </authorList>
    </citation>
    <scope>FUNCTION</scope>
    <scope>CATALYTIC ACTIVITY</scope>
    <scope>BIOPHYSICOCHEMICAL PROPERTIES</scope>
    <scope>SUBCELLULAR LOCATION</scope>
    <scope>TISSUE SPECIFICITY</scope>
    <scope>DISRUPTION PHENOTYPE</scope>
</reference>
<reference key="4">
    <citation type="journal article" date="2010" name="FEBS Lett.">
        <title>Adenosine-5'-phosphosulfate kinase is essential for Arabidopsis viability.</title>
        <authorList>
            <person name="Mugford S.G."/>
            <person name="Matthewman C.A."/>
            <person name="Hill L."/>
            <person name="Kopriva S."/>
        </authorList>
    </citation>
    <scope>FUNCTION</scope>
</reference>
<feature type="chain" id="PRO_0000424066" description="Adenylyl-sulfate kinase 3">
    <location>
        <begin position="1"/>
        <end position="208"/>
    </location>
</feature>
<feature type="active site" description="Phosphoserine intermediate" evidence="1">
    <location>
        <position position="111"/>
    </location>
</feature>
<feature type="binding site" evidence="1">
    <location>
        <begin position="37"/>
        <end position="45"/>
    </location>
    <ligand>
        <name>ATP</name>
        <dbReference type="ChEBI" id="CHEBI:30616"/>
    </ligand>
</feature>
<feature type="binding site" evidence="1">
    <location>
        <position position="67"/>
    </location>
    <ligand>
        <name>substrate</name>
    </ligand>
</feature>
<feature type="binding site" evidence="1">
    <location>
        <position position="70"/>
    </location>
    <ligand>
        <name>substrate</name>
    </ligand>
</feature>
<feature type="binding site" evidence="1">
    <location>
        <position position="84"/>
    </location>
    <ligand>
        <name>substrate</name>
    </ligand>
</feature>
<feature type="binding site" evidence="1">
    <location>
        <position position="87"/>
    </location>
    <ligand>
        <name>substrate</name>
    </ligand>
</feature>
<feature type="binding site" evidence="1">
    <location>
        <begin position="110"/>
        <end position="111"/>
    </location>
    <ligand>
        <name>substrate</name>
    </ligand>
</feature>
<feature type="binding site" evidence="1">
    <location>
        <position position="160"/>
    </location>
    <ligand>
        <name>substrate</name>
    </ligand>
</feature>
<feature type="site" description="Participates in a stacking interaction with the adenine ring of adenylyl-sulfate" evidence="1">
    <location>
        <position position="79"/>
    </location>
</feature>
<accession>Q9SRW7</accession>
<accession>Q9SQR9</accession>
<organism>
    <name type="scientific">Arabidopsis thaliana</name>
    <name type="common">Mouse-ear cress</name>
    <dbReference type="NCBI Taxonomy" id="3702"/>
    <lineage>
        <taxon>Eukaryota</taxon>
        <taxon>Viridiplantae</taxon>
        <taxon>Streptophyta</taxon>
        <taxon>Embryophyta</taxon>
        <taxon>Tracheophyta</taxon>
        <taxon>Spermatophyta</taxon>
        <taxon>Magnoliopsida</taxon>
        <taxon>eudicotyledons</taxon>
        <taxon>Gunneridae</taxon>
        <taxon>Pentapetalae</taxon>
        <taxon>rosids</taxon>
        <taxon>malvids</taxon>
        <taxon>Brassicales</taxon>
        <taxon>Brassicaceae</taxon>
        <taxon>Camelineae</taxon>
        <taxon>Arabidopsis</taxon>
    </lineage>
</organism>
<sequence>MSTVGNSTNIFWQESPIGKTERQKLLNQKGCVVWITGLSGSGKSTLACSLSRELNNRGKLSYILDGDNLRHGLNKDLGFKAEDRVENIRRVGEVAKLFADAGLICIASLISPYRKDRDACREMIQNSSFIEVFMNMSLQLCEARDPKGLYKLARAGKIKGFTGIDDPYESPLNCEIELKEKEGECPSPVAMAEEVISYLEDKGFLQNE</sequence>
<name>APK3_ARATH</name>
<evidence type="ECO:0000250" key="1">
    <source>
        <dbReference type="UniProtKB" id="Q43295"/>
    </source>
</evidence>
<evidence type="ECO:0000269" key="2">
    <source>
    </source>
</evidence>
<evidence type="ECO:0000269" key="3">
    <source>
    </source>
</evidence>
<evidence type="ECO:0000303" key="4">
    <source>
    </source>
</evidence>
<evidence type="ECO:0000305" key="5"/>
<proteinExistence type="evidence at protein level"/>
<protein>
    <recommendedName>
        <fullName evidence="5">Adenylyl-sulfate kinase 3</fullName>
        <ecNumber evidence="2">2.7.1.25</ecNumber>
    </recommendedName>
    <alternativeName>
        <fullName>ATP adenosine-5'-phosphosulfate 3'-phosphotransferase 3</fullName>
    </alternativeName>
    <alternativeName>
        <fullName evidence="4">Adenosine-5'-phosphosulfate kinase 3</fullName>
        <shortName evidence="4">APS kinase 3</shortName>
    </alternativeName>
</protein>
<keyword id="KW-0028">Amino-acid biosynthesis</keyword>
<keyword id="KW-0067">ATP-binding</keyword>
<keyword id="KW-0198">Cysteine biosynthesis</keyword>
<keyword id="KW-0963">Cytoplasm</keyword>
<keyword id="KW-0418">Kinase</keyword>
<keyword id="KW-0547">Nucleotide-binding</keyword>
<keyword id="KW-1185">Reference proteome</keyword>
<keyword id="KW-0808">Transferase</keyword>